<accession>O09112</accession>
<comment type="function">
    <text evidence="6 8">Has phosphatase activity with synthetic phosphatase substrates and negatively regulates mitogen-activated protein kinase activity, presumably by catalysing their dephosphorylation (PubMed:7561881). Expected to display protein phosphatase activity toward phosphotyrosine, phosphoserine and phosphothreonine residues (Probable).</text>
</comment>
<comment type="catalytic activity">
    <reaction evidence="4">
        <text>O-phospho-L-tyrosyl-[protein] + H2O = L-tyrosyl-[protein] + phosphate</text>
        <dbReference type="Rhea" id="RHEA:10684"/>
        <dbReference type="Rhea" id="RHEA-COMP:10136"/>
        <dbReference type="Rhea" id="RHEA-COMP:20101"/>
        <dbReference type="ChEBI" id="CHEBI:15377"/>
        <dbReference type="ChEBI" id="CHEBI:43474"/>
        <dbReference type="ChEBI" id="CHEBI:46858"/>
        <dbReference type="ChEBI" id="CHEBI:61978"/>
        <dbReference type="EC" id="3.1.3.48"/>
    </reaction>
</comment>
<comment type="catalytic activity">
    <reaction>
        <text>O-phospho-L-seryl-[protein] + H2O = L-seryl-[protein] + phosphate</text>
        <dbReference type="Rhea" id="RHEA:20629"/>
        <dbReference type="Rhea" id="RHEA-COMP:9863"/>
        <dbReference type="Rhea" id="RHEA-COMP:11604"/>
        <dbReference type="ChEBI" id="CHEBI:15377"/>
        <dbReference type="ChEBI" id="CHEBI:29999"/>
        <dbReference type="ChEBI" id="CHEBI:43474"/>
        <dbReference type="ChEBI" id="CHEBI:83421"/>
        <dbReference type="EC" id="3.1.3.16"/>
    </reaction>
</comment>
<comment type="catalytic activity">
    <reaction>
        <text>O-phospho-L-threonyl-[protein] + H2O = L-threonyl-[protein] + phosphate</text>
        <dbReference type="Rhea" id="RHEA:47004"/>
        <dbReference type="Rhea" id="RHEA-COMP:11060"/>
        <dbReference type="Rhea" id="RHEA-COMP:11605"/>
        <dbReference type="ChEBI" id="CHEBI:15377"/>
        <dbReference type="ChEBI" id="CHEBI:30013"/>
        <dbReference type="ChEBI" id="CHEBI:43474"/>
        <dbReference type="ChEBI" id="CHEBI:61977"/>
        <dbReference type="EC" id="3.1.3.16"/>
    </reaction>
</comment>
<comment type="subunit">
    <text evidence="1">Monomer.</text>
</comment>
<comment type="subcellular location">
    <subcellularLocation>
        <location evidence="7">Cytoplasm</location>
    </subcellularLocation>
    <subcellularLocation>
        <location evidence="7">Nucleus</location>
    </subcellularLocation>
</comment>
<comment type="tissue specificity">
    <text evidence="7">Expressed predominantly in brain and lung.</text>
</comment>
<comment type="similarity">
    <text evidence="8">Belongs to the protein-tyrosine phosphatase family. Non-receptor class dual specificity subfamily.</text>
</comment>
<organism>
    <name type="scientific">Mus musculus</name>
    <name type="common">Mouse</name>
    <dbReference type="NCBI Taxonomy" id="10090"/>
    <lineage>
        <taxon>Eukaryota</taxon>
        <taxon>Metazoa</taxon>
        <taxon>Chordata</taxon>
        <taxon>Craniata</taxon>
        <taxon>Vertebrata</taxon>
        <taxon>Euteleostomi</taxon>
        <taxon>Mammalia</taxon>
        <taxon>Eutheria</taxon>
        <taxon>Euarchontoglires</taxon>
        <taxon>Glires</taxon>
        <taxon>Rodentia</taxon>
        <taxon>Myomorpha</taxon>
        <taxon>Muroidea</taxon>
        <taxon>Muridae</taxon>
        <taxon>Murinae</taxon>
        <taxon>Mus</taxon>
        <taxon>Mus</taxon>
    </lineage>
</organism>
<keyword id="KW-0963">Cytoplasm</keyword>
<keyword id="KW-0378">Hydrolase</keyword>
<keyword id="KW-0539">Nucleus</keyword>
<keyword id="KW-0904">Protein phosphatase</keyword>
<keyword id="KW-1185">Reference proteome</keyword>
<name>DUS8_MOUSE</name>
<feature type="chain" id="PRO_0000094811" description="Dual specificity protein phosphatase 8">
    <location>
        <begin position="1"/>
        <end position="663"/>
    </location>
</feature>
<feature type="domain" description="Rhodanese" evidence="3">
    <location>
        <begin position="23"/>
        <end position="138"/>
    </location>
</feature>
<feature type="domain" description="Tyrosine-protein phosphatase" evidence="2">
    <location>
        <begin position="160"/>
        <end position="302"/>
    </location>
</feature>
<feature type="region of interest" description="Disordered" evidence="5">
    <location>
        <begin position="313"/>
        <end position="367"/>
    </location>
</feature>
<feature type="region of interest" description="Disordered" evidence="5">
    <location>
        <begin position="404"/>
        <end position="624"/>
    </location>
</feature>
<feature type="compositionally biased region" description="Low complexity" evidence="5">
    <location>
        <begin position="334"/>
        <end position="353"/>
    </location>
</feature>
<feature type="compositionally biased region" description="Low complexity" evidence="5">
    <location>
        <begin position="427"/>
        <end position="448"/>
    </location>
</feature>
<feature type="compositionally biased region" description="Low complexity" evidence="5">
    <location>
        <begin position="546"/>
        <end position="557"/>
    </location>
</feature>
<feature type="compositionally biased region" description="Gly residues" evidence="5">
    <location>
        <begin position="558"/>
        <end position="577"/>
    </location>
</feature>
<feature type="compositionally biased region" description="Low complexity" evidence="5">
    <location>
        <begin position="578"/>
        <end position="600"/>
    </location>
</feature>
<feature type="active site" description="Phosphocysteine intermediate" evidence="2">
    <location>
        <position position="246"/>
    </location>
</feature>
<gene>
    <name type="primary">Dusp8</name>
    <name type="synonym">Nttp1</name>
</gene>
<sequence length="663" mass="68847">MAGDRLPRKVMDAKKLASLLRGGPGGPLVIDSRSFVEYNSCHVLSSVNICCSKLVKRRLQQGKVTIAELIQPATRSQVDATEPQDVVVYDQSTRDASVLAADSFLSILLSKLDGCFDSVAILTGGFATFSSCFPGLCEGKPATLPSMSLSQPCLPVPSVGLTRILPHLYLGSQKDVLNKDLMTQNGISYVLNASNSCPKPDFICESRFMRIPINDNYCEKLLPWLDKSIEFIDKAKLSSCQVIVHCLAGISRSATIAIAYIMKTMGMSSDDAYRFVKDRRPSISPNFNFLGQLLEYERSLKLLAALQTDGPHLGTPEPLMGPAAGIPLPRLPPSTSESAATGSEAATAAREGSPSAGGDAPIPSTAPATSALQQGLRGLHLSSDRLQDTNRLKRSFSLDIKSAYAPSRRPDFPGPPDPGEAPKLCKLDSPSGGTLGLPSPSPDSPDSVPECRPRPRRRRPPASSPARSPAHGLGLNFGDTARQTPRHGLSALSAPGLPGPGQPAGPGGWVPPLDSPGTPSPDGPWCFSPEGAQGPGAVFSAFGRVSAGAPGPGNSSSSGGGGGGGGGGGGGGGGGGSSSSNSSSSSSSSSSSSSSSSSSSDLRRRDVRTGWPEEPAADAQFKRRSCQMEFEEGMVEGRARGEELAALGKQTSFSGSVEVIEVS</sequence>
<dbReference type="EC" id="3.1.3.16"/>
<dbReference type="EC" id="3.1.3.48"/>
<dbReference type="EMBL" id="X95518">
    <property type="protein sequence ID" value="CAA64772.1"/>
    <property type="molecule type" value="mRNA"/>
</dbReference>
<dbReference type="CCDS" id="CCDS22024.1"/>
<dbReference type="RefSeq" id="NP_032774.1">
    <property type="nucleotide sequence ID" value="NM_008748.3"/>
</dbReference>
<dbReference type="RefSeq" id="XP_006508572.1">
    <property type="nucleotide sequence ID" value="XM_006508509.5"/>
</dbReference>
<dbReference type="RefSeq" id="XP_011240291.1">
    <property type="nucleotide sequence ID" value="XM_011241989.4"/>
</dbReference>
<dbReference type="SMR" id="O09112"/>
<dbReference type="FunCoup" id="O09112">
    <property type="interactions" value="657"/>
</dbReference>
<dbReference type="STRING" id="10090.ENSMUSP00000049414"/>
<dbReference type="iPTMnet" id="O09112"/>
<dbReference type="PhosphoSitePlus" id="O09112"/>
<dbReference type="PaxDb" id="10090-ENSMUSP00000049414"/>
<dbReference type="ProteomicsDB" id="277615"/>
<dbReference type="Antibodypedia" id="10181">
    <property type="antibodies" value="213 antibodies from 30 providers"/>
</dbReference>
<dbReference type="DNASU" id="18218"/>
<dbReference type="Ensembl" id="ENSMUST00000039926.10">
    <property type="protein sequence ID" value="ENSMUSP00000049414.4"/>
    <property type="gene ID" value="ENSMUSG00000037887.12"/>
</dbReference>
<dbReference type="GeneID" id="18218"/>
<dbReference type="KEGG" id="mmu:18218"/>
<dbReference type="UCSC" id="uc009kmo.2">
    <property type="organism name" value="mouse"/>
</dbReference>
<dbReference type="AGR" id="MGI:106626"/>
<dbReference type="CTD" id="1850"/>
<dbReference type="MGI" id="MGI:106626">
    <property type="gene designation" value="Dusp8"/>
</dbReference>
<dbReference type="VEuPathDB" id="HostDB:ENSMUSG00000037887"/>
<dbReference type="eggNOG" id="KOG1716">
    <property type="taxonomic scope" value="Eukaryota"/>
</dbReference>
<dbReference type="GeneTree" id="ENSGT00940000160004"/>
<dbReference type="HOGENOM" id="CLU_027074_16_0_1"/>
<dbReference type="InParanoid" id="O09112"/>
<dbReference type="OMA" id="TDKQFKR"/>
<dbReference type="OrthoDB" id="165342at2759"/>
<dbReference type="PhylomeDB" id="O09112"/>
<dbReference type="TreeFam" id="TF105122"/>
<dbReference type="Reactome" id="R-MMU-112409">
    <property type="pathway name" value="RAF-independent MAPK1/3 activation"/>
</dbReference>
<dbReference type="Reactome" id="R-MMU-5675221">
    <property type="pathway name" value="Negative regulation of MAPK pathway"/>
</dbReference>
<dbReference type="BioGRID-ORCS" id="18218">
    <property type="hits" value="1 hit in 77 CRISPR screens"/>
</dbReference>
<dbReference type="PRO" id="PR:O09112"/>
<dbReference type="Proteomes" id="UP000000589">
    <property type="component" value="Chromosome 7"/>
</dbReference>
<dbReference type="RNAct" id="O09112">
    <property type="molecule type" value="protein"/>
</dbReference>
<dbReference type="Bgee" id="ENSMUSG00000037887">
    <property type="expression patterns" value="Expressed in caudate-putamen and 168 other cell types or tissues"/>
</dbReference>
<dbReference type="ExpressionAtlas" id="O09112">
    <property type="expression patterns" value="baseline and differential"/>
</dbReference>
<dbReference type="GO" id="GO:0005737">
    <property type="term" value="C:cytoplasm"/>
    <property type="evidence" value="ECO:0007669"/>
    <property type="project" value="UniProtKB-SubCell"/>
</dbReference>
<dbReference type="GO" id="GO:0005634">
    <property type="term" value="C:nucleus"/>
    <property type="evidence" value="ECO:0007669"/>
    <property type="project" value="UniProtKB-SubCell"/>
</dbReference>
<dbReference type="GO" id="GO:0017017">
    <property type="term" value="F:MAP kinase tyrosine/serine/threonine phosphatase activity"/>
    <property type="evidence" value="ECO:0007669"/>
    <property type="project" value="InterPro"/>
</dbReference>
<dbReference type="GO" id="GO:0016791">
    <property type="term" value="F:phosphatase activity"/>
    <property type="evidence" value="ECO:0000314"/>
    <property type="project" value="UniProtKB"/>
</dbReference>
<dbReference type="GO" id="GO:0004722">
    <property type="term" value="F:protein serine/threonine phosphatase activity"/>
    <property type="evidence" value="ECO:0007669"/>
    <property type="project" value="UniProtKB-EC"/>
</dbReference>
<dbReference type="GO" id="GO:0004725">
    <property type="term" value="F:protein tyrosine phosphatase activity"/>
    <property type="evidence" value="ECO:0007669"/>
    <property type="project" value="UniProtKB-EC"/>
</dbReference>
<dbReference type="GO" id="GO:0016311">
    <property type="term" value="P:dephosphorylation"/>
    <property type="evidence" value="ECO:0000314"/>
    <property type="project" value="UniProtKB"/>
</dbReference>
<dbReference type="CDD" id="cd14645">
    <property type="entry name" value="DSP_DUSP8"/>
    <property type="match status" value="1"/>
</dbReference>
<dbReference type="CDD" id="cd01446">
    <property type="entry name" value="DSP_MapKP"/>
    <property type="match status" value="1"/>
</dbReference>
<dbReference type="FunFam" id="3.40.250.10:FF:000020">
    <property type="entry name" value="Dual specificity protein phosphatase 8"/>
    <property type="match status" value="1"/>
</dbReference>
<dbReference type="FunFam" id="3.90.190.10:FF:000044">
    <property type="entry name" value="Dual specificity protein phosphatase 8"/>
    <property type="match status" value="1"/>
</dbReference>
<dbReference type="Gene3D" id="3.90.190.10">
    <property type="entry name" value="Protein tyrosine phosphatase superfamily"/>
    <property type="match status" value="1"/>
</dbReference>
<dbReference type="Gene3D" id="3.40.250.10">
    <property type="entry name" value="Rhodanese-like domain"/>
    <property type="match status" value="1"/>
</dbReference>
<dbReference type="InterPro" id="IPR000340">
    <property type="entry name" value="Dual-sp_phosphatase_cat-dom"/>
</dbReference>
<dbReference type="InterPro" id="IPR048035">
    <property type="entry name" value="DUSP8_DSP"/>
</dbReference>
<dbReference type="InterPro" id="IPR008343">
    <property type="entry name" value="MKP"/>
</dbReference>
<dbReference type="InterPro" id="IPR029021">
    <property type="entry name" value="Prot-tyrosine_phosphatase-like"/>
</dbReference>
<dbReference type="InterPro" id="IPR001763">
    <property type="entry name" value="Rhodanese-like_dom"/>
</dbReference>
<dbReference type="InterPro" id="IPR036873">
    <property type="entry name" value="Rhodanese-like_dom_sf"/>
</dbReference>
<dbReference type="InterPro" id="IPR016130">
    <property type="entry name" value="Tyr_Pase_AS"/>
</dbReference>
<dbReference type="InterPro" id="IPR000387">
    <property type="entry name" value="Tyr_Pase_dom"/>
</dbReference>
<dbReference type="InterPro" id="IPR020422">
    <property type="entry name" value="TYR_PHOSPHATASE_DUAL_dom"/>
</dbReference>
<dbReference type="PANTHER" id="PTHR10159">
    <property type="entry name" value="DUAL SPECIFICITY PROTEIN PHOSPHATASE"/>
    <property type="match status" value="1"/>
</dbReference>
<dbReference type="PANTHER" id="PTHR10159:SF108">
    <property type="entry name" value="DUAL SPECIFICITY PROTEIN PHOSPHATASE 8"/>
    <property type="match status" value="1"/>
</dbReference>
<dbReference type="Pfam" id="PF00782">
    <property type="entry name" value="DSPc"/>
    <property type="match status" value="1"/>
</dbReference>
<dbReference type="Pfam" id="PF00581">
    <property type="entry name" value="Rhodanese"/>
    <property type="match status" value="1"/>
</dbReference>
<dbReference type="PRINTS" id="PR01764">
    <property type="entry name" value="MAPKPHPHTASE"/>
</dbReference>
<dbReference type="SMART" id="SM00195">
    <property type="entry name" value="DSPc"/>
    <property type="match status" value="1"/>
</dbReference>
<dbReference type="SMART" id="SM00450">
    <property type="entry name" value="RHOD"/>
    <property type="match status" value="1"/>
</dbReference>
<dbReference type="SUPFAM" id="SSF52799">
    <property type="entry name" value="(Phosphotyrosine protein) phosphatases II"/>
    <property type="match status" value="1"/>
</dbReference>
<dbReference type="SUPFAM" id="SSF52821">
    <property type="entry name" value="Rhodanese/Cell cycle control phosphatase"/>
    <property type="match status" value="1"/>
</dbReference>
<dbReference type="PROSITE" id="PS50206">
    <property type="entry name" value="RHODANESE_3"/>
    <property type="match status" value="1"/>
</dbReference>
<dbReference type="PROSITE" id="PS00383">
    <property type="entry name" value="TYR_PHOSPHATASE_1"/>
    <property type="match status" value="1"/>
</dbReference>
<dbReference type="PROSITE" id="PS50056">
    <property type="entry name" value="TYR_PHOSPHATASE_2"/>
    <property type="match status" value="1"/>
</dbReference>
<dbReference type="PROSITE" id="PS50054">
    <property type="entry name" value="TYR_PHOSPHATASE_DUAL"/>
    <property type="match status" value="1"/>
</dbReference>
<evidence type="ECO:0000250" key="1">
    <source>
        <dbReference type="UniProtKB" id="Q13202"/>
    </source>
</evidence>
<evidence type="ECO:0000255" key="2">
    <source>
        <dbReference type="PROSITE-ProRule" id="PRU00160"/>
    </source>
</evidence>
<evidence type="ECO:0000255" key="3">
    <source>
        <dbReference type="PROSITE-ProRule" id="PRU00173"/>
    </source>
</evidence>
<evidence type="ECO:0000255" key="4">
    <source>
        <dbReference type="PROSITE-ProRule" id="PRU10044"/>
    </source>
</evidence>
<evidence type="ECO:0000256" key="5">
    <source>
        <dbReference type="SAM" id="MobiDB-lite"/>
    </source>
</evidence>
<evidence type="ECO:0000269" key="6">
    <source>
    </source>
</evidence>
<evidence type="ECO:0000269" key="7">
    <source>
    </source>
</evidence>
<evidence type="ECO:0000305" key="8"/>
<reference key="1">
    <citation type="journal article" date="1996" name="Hum. Mol. Genet.">
        <title>A member of the MAP kinase phosphatase gene family in mouse containing a complex trinucleotide repeat in the coding region.</title>
        <authorList>
            <person name="Theodosiou A.M."/>
            <person name="Rodrigues N.R."/>
            <person name="Nesbit M.A."/>
            <person name="Ambrose H.J."/>
            <person name="Paterson H."/>
            <person name="McLellan-Arnold E."/>
            <person name="Boyd Y."/>
            <person name="Leversha M.A."/>
            <person name="Owen N."/>
            <person name="Blake D.J."/>
            <person name="Ashworth A."/>
            <person name="Davies K.E."/>
        </authorList>
    </citation>
    <scope>NUCLEOTIDE SEQUENCE [MRNA]</scope>
    <scope>SUBCELLULAR LOCATION</scope>
    <scope>TISSUE SPECIFICITY</scope>
    <source>
        <tissue>Brain</tissue>
    </source>
</reference>
<reference key="2">
    <citation type="journal article" date="1995" name="J. Neurochem.">
        <title>hVH-5: a protein tyrosine phosphatase abundant in brain that inactivates mitogen-activated protein kinase.</title>
        <authorList>
            <person name="Martell K.J."/>
            <person name="Seasholtz A.F."/>
            <person name="Kwak S.P."/>
            <person name="Clemens K.K."/>
            <person name="Dixon J.E."/>
        </authorList>
    </citation>
    <scope>FUNCTION</scope>
</reference>
<proteinExistence type="evidence at transcript level"/>
<protein>
    <recommendedName>
        <fullName>Dual specificity protein phosphatase 8</fullName>
        <ecNumber>3.1.3.16</ecNumber>
        <ecNumber>3.1.3.48</ecNumber>
    </recommendedName>
    <alternativeName>
        <fullName>Neuronal tyrosine threonine phosphatase 1</fullName>
    </alternativeName>
</protein>